<reference key="1">
    <citation type="journal article" date="2008" name="BMC Genomics">
        <title>Comparative genomic analysis of the gut bacterium Bifidobacterium longum reveals loci susceptible to deletion during pure culture growth.</title>
        <authorList>
            <person name="Lee J.H."/>
            <person name="Karamychev V.N."/>
            <person name="Kozyavkin S.A."/>
            <person name="Mills D."/>
            <person name="Pavlov A.R."/>
            <person name="Pavlova N.V."/>
            <person name="Polouchine N.N."/>
            <person name="Richardson P.M."/>
            <person name="Shakhova V.V."/>
            <person name="Slesarev A.I."/>
            <person name="Weimer B."/>
            <person name="O'Sullivan D.J."/>
        </authorList>
    </citation>
    <scope>NUCLEOTIDE SEQUENCE [LARGE SCALE GENOMIC DNA]</scope>
    <source>
        <strain>DJO10A</strain>
    </source>
</reference>
<proteinExistence type="inferred from homology"/>
<keyword id="KW-0133">Cell shape</keyword>
<keyword id="KW-0961">Cell wall biogenesis/degradation</keyword>
<keyword id="KW-0413">Isomerase</keyword>
<keyword id="KW-0573">Peptidoglycan synthesis</keyword>
<name>MURI_BIFLD</name>
<evidence type="ECO:0000255" key="1">
    <source>
        <dbReference type="HAMAP-Rule" id="MF_00258"/>
    </source>
</evidence>
<sequence>MSSSAPIGVFDSGLGGISVARQIAKDMPAEHVLYFGDSANAPYGIKTPEQVRALSFDIVERFVRQGVKAVVIACNTATSAAVNDLREHYDIPIIGMEPALKVACDRGDVPSDPHHIPQRVIVAATPLTLRERKFAKLMDRFDSNNTIFKEPCPDLVEIVESGRLGDHDLVMRTLHGYFDQYDMEHIDSVVLGCTHFVFYRDYFRELLPERAAVIDGNEGTVRHLGVVLESLGKLAPEDATGGVELANSDPSERIAELSRKLLNV</sequence>
<feature type="chain" id="PRO_1000114033" description="Glutamate racemase">
    <location>
        <begin position="1"/>
        <end position="264"/>
    </location>
</feature>
<feature type="active site" description="Proton donor/acceptor" evidence="1">
    <location>
        <position position="74"/>
    </location>
</feature>
<feature type="active site" description="Proton donor/acceptor" evidence="1">
    <location>
        <position position="193"/>
    </location>
</feature>
<feature type="binding site" evidence="1">
    <location>
        <begin position="11"/>
        <end position="12"/>
    </location>
    <ligand>
        <name>substrate</name>
    </ligand>
</feature>
<feature type="binding site" evidence="1">
    <location>
        <begin position="43"/>
        <end position="44"/>
    </location>
    <ligand>
        <name>substrate</name>
    </ligand>
</feature>
<feature type="binding site" evidence="1">
    <location>
        <begin position="75"/>
        <end position="76"/>
    </location>
    <ligand>
        <name>substrate</name>
    </ligand>
</feature>
<feature type="binding site" evidence="1">
    <location>
        <begin position="194"/>
        <end position="195"/>
    </location>
    <ligand>
        <name>substrate</name>
    </ligand>
</feature>
<dbReference type="EC" id="5.1.1.3" evidence="1"/>
<dbReference type="EMBL" id="CP000605">
    <property type="protein sequence ID" value="ACD97550.1"/>
    <property type="molecule type" value="Genomic_DNA"/>
</dbReference>
<dbReference type="RefSeq" id="WP_007053283.1">
    <property type="nucleotide sequence ID" value="NZ_AABM02000010.1"/>
</dbReference>
<dbReference type="SMR" id="B3DQ51"/>
<dbReference type="GeneID" id="69578581"/>
<dbReference type="KEGG" id="blj:BLD_0104"/>
<dbReference type="HOGENOM" id="CLU_052344_1_0_11"/>
<dbReference type="UniPathway" id="UPA00219"/>
<dbReference type="Proteomes" id="UP000002419">
    <property type="component" value="Chromosome"/>
</dbReference>
<dbReference type="GO" id="GO:0008881">
    <property type="term" value="F:glutamate racemase activity"/>
    <property type="evidence" value="ECO:0007669"/>
    <property type="project" value="UniProtKB-UniRule"/>
</dbReference>
<dbReference type="GO" id="GO:0071555">
    <property type="term" value="P:cell wall organization"/>
    <property type="evidence" value="ECO:0007669"/>
    <property type="project" value="UniProtKB-KW"/>
</dbReference>
<dbReference type="GO" id="GO:0009252">
    <property type="term" value="P:peptidoglycan biosynthetic process"/>
    <property type="evidence" value="ECO:0007669"/>
    <property type="project" value="UniProtKB-UniRule"/>
</dbReference>
<dbReference type="GO" id="GO:0008360">
    <property type="term" value="P:regulation of cell shape"/>
    <property type="evidence" value="ECO:0007669"/>
    <property type="project" value="UniProtKB-KW"/>
</dbReference>
<dbReference type="Gene3D" id="3.40.50.1860">
    <property type="match status" value="2"/>
</dbReference>
<dbReference type="HAMAP" id="MF_00258">
    <property type="entry name" value="Glu_racemase"/>
    <property type="match status" value="1"/>
</dbReference>
<dbReference type="InterPro" id="IPR015942">
    <property type="entry name" value="Asp/Glu/hydantoin_racemase"/>
</dbReference>
<dbReference type="InterPro" id="IPR001920">
    <property type="entry name" value="Asp/Glu_race"/>
</dbReference>
<dbReference type="InterPro" id="IPR018187">
    <property type="entry name" value="Asp/Glu_racemase_AS_1"/>
</dbReference>
<dbReference type="InterPro" id="IPR004391">
    <property type="entry name" value="Glu_race"/>
</dbReference>
<dbReference type="NCBIfam" id="TIGR00067">
    <property type="entry name" value="glut_race"/>
    <property type="match status" value="1"/>
</dbReference>
<dbReference type="PANTHER" id="PTHR21198">
    <property type="entry name" value="GLUTAMATE RACEMASE"/>
    <property type="match status" value="1"/>
</dbReference>
<dbReference type="PANTHER" id="PTHR21198:SF3">
    <property type="entry name" value="GLUTAMATE RACEMASE"/>
    <property type="match status" value="1"/>
</dbReference>
<dbReference type="Pfam" id="PF01177">
    <property type="entry name" value="Asp_Glu_race"/>
    <property type="match status" value="1"/>
</dbReference>
<dbReference type="SUPFAM" id="SSF53681">
    <property type="entry name" value="Aspartate/glutamate racemase"/>
    <property type="match status" value="2"/>
</dbReference>
<dbReference type="PROSITE" id="PS00923">
    <property type="entry name" value="ASP_GLU_RACEMASE_1"/>
    <property type="match status" value="1"/>
</dbReference>
<gene>
    <name evidence="1" type="primary">murI</name>
    <name type="ordered locus">BLD_0104</name>
</gene>
<protein>
    <recommendedName>
        <fullName evidence="1">Glutamate racemase</fullName>
        <ecNumber evidence="1">5.1.1.3</ecNumber>
    </recommendedName>
</protein>
<accession>B3DQ51</accession>
<comment type="function">
    <text evidence="1">Provides the (R)-glutamate required for cell wall biosynthesis.</text>
</comment>
<comment type="catalytic activity">
    <reaction evidence="1">
        <text>L-glutamate = D-glutamate</text>
        <dbReference type="Rhea" id="RHEA:12813"/>
        <dbReference type="ChEBI" id="CHEBI:29985"/>
        <dbReference type="ChEBI" id="CHEBI:29986"/>
        <dbReference type="EC" id="5.1.1.3"/>
    </reaction>
</comment>
<comment type="pathway">
    <text evidence="1">Cell wall biogenesis; peptidoglycan biosynthesis.</text>
</comment>
<comment type="similarity">
    <text evidence="1">Belongs to the aspartate/glutamate racemases family.</text>
</comment>
<organism>
    <name type="scientific">Bifidobacterium longum (strain DJO10A)</name>
    <dbReference type="NCBI Taxonomy" id="205913"/>
    <lineage>
        <taxon>Bacteria</taxon>
        <taxon>Bacillati</taxon>
        <taxon>Actinomycetota</taxon>
        <taxon>Actinomycetes</taxon>
        <taxon>Bifidobacteriales</taxon>
        <taxon>Bifidobacteriaceae</taxon>
        <taxon>Bifidobacterium</taxon>
    </lineage>
</organism>